<comment type="function">
    <text evidence="10">Lytic polysaccharide monooxygenase (LPMO) that depolymerizes crystalline and amorphous polysaccharides via the oxidation of scissile alpha- or beta-(1-4)-glycosidic bonds, yielding C1 and C4 oxidation products (Probable). Catalysis by LPMOs requires the reduction of the active-site copper from Cu(II) to Cu(I) by a reducing agent and H(2)O(2) or O(2) as a cosubstrate (Probable).</text>
</comment>
<comment type="catalytic activity">
    <reaction evidence="10">
        <text>[(1-&gt;4)-beta-D-glucosyl]n+m + reduced acceptor + O2 = 4-dehydro-beta-D-glucosyl-[(1-&gt;4)-beta-D-glucosyl]n-1 + [(1-&gt;4)-beta-D-glucosyl]m + acceptor + H2O.</text>
        <dbReference type="EC" id="1.14.99.56"/>
    </reaction>
</comment>
<comment type="cofactor">
    <cofactor evidence="10">
        <name>Cu(2+)</name>
        <dbReference type="ChEBI" id="CHEBI:29036"/>
    </cofactor>
    <text evidence="10">Binds 1 copper ion per subunit.</text>
</comment>
<comment type="subcellular location">
    <subcellularLocation>
        <location evidence="10">Secreted</location>
    </subcellularLocation>
</comment>
<comment type="induction">
    <text evidence="7">Expression is increased 4-fold in cellulose-inducible conditions (in Avicel- and wheat bran-containing complex medium).</text>
</comment>
<comment type="biotechnology">
    <text evidence="10">Lignocellulose is the most abundant polymeric composite on Earth and is a recalcitrant but promising renewable substrate for industrial biotechnology applications. Together with cellobiose dehydrogenases (CDHs) an enzymatic system capable of oxidative cellulose cleavage is formed, which increases the efficiency of cellulases and put LPMOs at focus of biofuel research.</text>
</comment>
<comment type="similarity">
    <text evidence="9">Belongs to the polysaccharide monooxygenase AA9 family.</text>
</comment>
<evidence type="ECO:0000250" key="1">
    <source>
        <dbReference type="UniProtKB" id="G2R6N0"/>
    </source>
</evidence>
<evidence type="ECO:0000250" key="2">
    <source>
        <dbReference type="UniProtKB" id="Q1K8B6"/>
    </source>
</evidence>
<evidence type="ECO:0000250" key="3">
    <source>
        <dbReference type="UniProtKB" id="Q4WP32"/>
    </source>
</evidence>
<evidence type="ECO:0000250" key="4">
    <source>
        <dbReference type="UniProtKB" id="Q7Z9M7"/>
    </source>
</evidence>
<evidence type="ECO:0000255" key="5"/>
<evidence type="ECO:0000255" key="6">
    <source>
        <dbReference type="PROSITE-ProRule" id="PRU00498"/>
    </source>
</evidence>
<evidence type="ECO:0000269" key="7">
    <source>
    </source>
</evidence>
<evidence type="ECO:0000303" key="8">
    <source>
    </source>
</evidence>
<evidence type="ECO:0000305" key="9"/>
<evidence type="ECO:0000305" key="10">
    <source>
    </source>
</evidence>
<gene>
    <name evidence="8" type="primary">AA9E</name>
    <name type="ORF">BCIN_03g05890</name>
</gene>
<accession>A0A384JDH0</accession>
<organism>
    <name type="scientific">Botryotinia fuckeliana (strain B05.10)</name>
    <name type="common">Noble rot fungus</name>
    <name type="synonym">Botrytis cinerea</name>
    <dbReference type="NCBI Taxonomy" id="332648"/>
    <lineage>
        <taxon>Eukaryota</taxon>
        <taxon>Fungi</taxon>
        <taxon>Dikarya</taxon>
        <taxon>Ascomycota</taxon>
        <taxon>Pezizomycotina</taxon>
        <taxon>Leotiomycetes</taxon>
        <taxon>Helotiales</taxon>
        <taxon>Sclerotiniaceae</taxon>
        <taxon>Botrytis</taxon>
    </lineage>
</organism>
<sequence length="229" mass="23945">MRSSDITFVLLSVVATVRSHATFQELWINSVDQVGSCVRLPPTNSPITDLTSTDLRCNVGGTVGVSGVCSVAAGGNVTVEMHQQPGDRSCANEAIGGAHYGPVILYMSKVSNAATDTGSGSWFKVDQEGYDQTLNANCGKRSFTIPSTLAPGDYLLRAEVIALHVAGSVGGAQLYMSCFQLRVTGSGSKNPTGVLFPGAYSATDPGILINIYQTINNYTIPGPTTVFTG</sequence>
<protein>
    <recommendedName>
        <fullName evidence="8">AA9 family lytic polysaccharide monooxygenase E</fullName>
        <shortName evidence="8">AA9E</shortName>
        <ecNumber evidence="10">1.14.99.56</ecNumber>
    </recommendedName>
    <alternativeName>
        <fullName evidence="9">Endo-1,4-beta-glucanase AA9E</fullName>
        <shortName evidence="9">Endoglucanase AA9E</shortName>
    </alternativeName>
    <alternativeName>
        <fullName evidence="9">Glycosyl hydrolase 61 family protein AA9E</fullName>
    </alternativeName>
</protein>
<keyword id="KW-0119">Carbohydrate metabolism</keyword>
<keyword id="KW-0136">Cellulose degradation</keyword>
<keyword id="KW-0186">Copper</keyword>
<keyword id="KW-1015">Disulfide bond</keyword>
<keyword id="KW-0325">Glycoprotein</keyword>
<keyword id="KW-0479">Metal-binding</keyword>
<keyword id="KW-0503">Monooxygenase</keyword>
<keyword id="KW-0560">Oxidoreductase</keyword>
<keyword id="KW-0624">Polysaccharide degradation</keyword>
<keyword id="KW-1185">Reference proteome</keyword>
<keyword id="KW-0964">Secreted</keyword>
<keyword id="KW-0732">Signal</keyword>
<proteinExistence type="evidence at transcript level"/>
<feature type="signal peptide" evidence="5">
    <location>
        <begin position="1"/>
        <end position="19"/>
    </location>
</feature>
<feature type="chain" id="PRO_5017037546" description="AA9 family lytic polysaccharide monooxygenase E" evidence="5">
    <location>
        <begin position="20"/>
        <end position="229"/>
    </location>
</feature>
<feature type="binding site" evidence="1">
    <location>
        <position position="20"/>
    </location>
    <ligand>
        <name>Cu(2+)</name>
        <dbReference type="ChEBI" id="CHEBI:29036"/>
    </ligand>
</feature>
<feature type="binding site" evidence="3">
    <location>
        <position position="99"/>
    </location>
    <ligand>
        <name>Cu(2+)</name>
        <dbReference type="ChEBI" id="CHEBI:29036"/>
    </ligand>
</feature>
<feature type="binding site" evidence="2">
    <location>
        <position position="164"/>
    </location>
    <ligand>
        <name>O2</name>
        <dbReference type="ChEBI" id="CHEBI:15379"/>
    </ligand>
</feature>
<feature type="binding site" evidence="2">
    <location>
        <position position="173"/>
    </location>
    <ligand>
        <name>O2</name>
        <dbReference type="ChEBI" id="CHEBI:15379"/>
    </ligand>
</feature>
<feature type="binding site" evidence="1">
    <location>
        <position position="175"/>
    </location>
    <ligand>
        <name>Cu(2+)</name>
        <dbReference type="ChEBI" id="CHEBI:29036"/>
    </ligand>
</feature>
<feature type="glycosylation site" description="N-linked (GlcNAc...) asparagine" evidence="6">
    <location>
        <position position="76"/>
    </location>
</feature>
<feature type="glycosylation site" description="N-linked (GlcNAc...) asparagine" evidence="6">
    <location>
        <position position="217"/>
    </location>
</feature>
<feature type="disulfide bond" evidence="4">
    <location>
        <begin position="57"/>
        <end position="178"/>
    </location>
</feature>
<dbReference type="EC" id="1.14.99.56" evidence="10"/>
<dbReference type="EMBL" id="CP009807">
    <property type="protein sequence ID" value="ATZ48364.1"/>
    <property type="molecule type" value="Genomic_DNA"/>
</dbReference>
<dbReference type="SMR" id="A0A384JDH0"/>
<dbReference type="EnsemblFungi" id="Bcin03g05890.1">
    <property type="protein sequence ID" value="Bcin03p05890.1"/>
    <property type="gene ID" value="Bcin03g05890"/>
</dbReference>
<dbReference type="VEuPathDB" id="FungiDB:Bcin03g05890"/>
<dbReference type="OrthoDB" id="3238762at2759"/>
<dbReference type="Proteomes" id="UP000001798">
    <property type="component" value="Chromosome bcin03"/>
</dbReference>
<dbReference type="GO" id="GO:0005576">
    <property type="term" value="C:extracellular region"/>
    <property type="evidence" value="ECO:0007669"/>
    <property type="project" value="UniProtKB-SubCell"/>
</dbReference>
<dbReference type="GO" id="GO:0046872">
    <property type="term" value="F:metal ion binding"/>
    <property type="evidence" value="ECO:0007669"/>
    <property type="project" value="UniProtKB-KW"/>
</dbReference>
<dbReference type="GO" id="GO:0004497">
    <property type="term" value="F:monooxygenase activity"/>
    <property type="evidence" value="ECO:0007669"/>
    <property type="project" value="UniProtKB-KW"/>
</dbReference>
<dbReference type="GO" id="GO:0030245">
    <property type="term" value="P:cellulose catabolic process"/>
    <property type="evidence" value="ECO:0007669"/>
    <property type="project" value="UniProtKB-KW"/>
</dbReference>
<dbReference type="CDD" id="cd21175">
    <property type="entry name" value="LPMO_AA9"/>
    <property type="match status" value="1"/>
</dbReference>
<dbReference type="Gene3D" id="2.70.50.70">
    <property type="match status" value="1"/>
</dbReference>
<dbReference type="InterPro" id="IPR049892">
    <property type="entry name" value="AA9"/>
</dbReference>
<dbReference type="InterPro" id="IPR005103">
    <property type="entry name" value="AA9_LPMO"/>
</dbReference>
<dbReference type="PANTHER" id="PTHR33353:SF9">
    <property type="entry name" value="ENDOGLUCANASE II"/>
    <property type="match status" value="1"/>
</dbReference>
<dbReference type="PANTHER" id="PTHR33353">
    <property type="entry name" value="PUTATIVE (AFU_ORTHOLOGUE AFUA_1G12560)-RELATED"/>
    <property type="match status" value="1"/>
</dbReference>
<dbReference type="Pfam" id="PF03443">
    <property type="entry name" value="AA9"/>
    <property type="match status" value="1"/>
</dbReference>
<name>LP9E_BOTFB</name>
<reference key="1">
    <citation type="journal article" date="2011" name="PLoS Genet.">
        <title>Genomic analysis of the necrotrophic fungal pathogens Sclerotinia sclerotiorum and Botrytis cinerea.</title>
        <authorList>
            <person name="Amselem J."/>
            <person name="Cuomo C.A."/>
            <person name="van Kan J.A.L."/>
            <person name="Viaud M."/>
            <person name="Benito E.P."/>
            <person name="Couloux A."/>
            <person name="Coutinho P.M."/>
            <person name="de Vries R.P."/>
            <person name="Dyer P.S."/>
            <person name="Fillinger S."/>
            <person name="Fournier E."/>
            <person name="Gout L."/>
            <person name="Hahn M."/>
            <person name="Kohn L."/>
            <person name="Lapalu N."/>
            <person name="Plummer K.M."/>
            <person name="Pradier J.-M."/>
            <person name="Quevillon E."/>
            <person name="Sharon A."/>
            <person name="Simon A."/>
            <person name="ten Have A."/>
            <person name="Tudzynski B."/>
            <person name="Tudzynski P."/>
            <person name="Wincker P."/>
            <person name="Andrew M."/>
            <person name="Anthouard V."/>
            <person name="Beever R.E."/>
            <person name="Beffa R."/>
            <person name="Benoit I."/>
            <person name="Bouzid O."/>
            <person name="Brault B."/>
            <person name="Chen Z."/>
            <person name="Choquer M."/>
            <person name="Collemare J."/>
            <person name="Cotton P."/>
            <person name="Danchin E.G."/>
            <person name="Da Silva C."/>
            <person name="Gautier A."/>
            <person name="Giraud C."/>
            <person name="Giraud T."/>
            <person name="Gonzalez C."/>
            <person name="Grossetete S."/>
            <person name="Gueldener U."/>
            <person name="Henrissat B."/>
            <person name="Howlett B.J."/>
            <person name="Kodira C."/>
            <person name="Kretschmer M."/>
            <person name="Lappartient A."/>
            <person name="Leroch M."/>
            <person name="Levis C."/>
            <person name="Mauceli E."/>
            <person name="Neuveglise C."/>
            <person name="Oeser B."/>
            <person name="Pearson M."/>
            <person name="Poulain J."/>
            <person name="Poussereau N."/>
            <person name="Quesneville H."/>
            <person name="Rascle C."/>
            <person name="Schumacher J."/>
            <person name="Segurens B."/>
            <person name="Sexton A."/>
            <person name="Silva E."/>
            <person name="Sirven C."/>
            <person name="Soanes D.M."/>
            <person name="Talbot N.J."/>
            <person name="Templeton M."/>
            <person name="Yandava C."/>
            <person name="Yarden O."/>
            <person name="Zeng Q."/>
            <person name="Rollins J.A."/>
            <person name="Lebrun M.-H."/>
            <person name="Dickman M."/>
        </authorList>
    </citation>
    <scope>NUCLEOTIDE SEQUENCE [LARGE SCALE GENOMIC DNA]</scope>
    <source>
        <strain>B05.10</strain>
    </source>
</reference>
<reference key="2">
    <citation type="journal article" date="2012" name="Eukaryot. Cell">
        <title>Genome update of Botrytis cinerea strains B05.10 and T4.</title>
        <authorList>
            <person name="Staats M."/>
            <person name="van Kan J.A.L."/>
        </authorList>
    </citation>
    <scope>NUCLEOTIDE SEQUENCE [LARGE SCALE GENOMIC DNA]</scope>
    <source>
        <strain>B05.10</strain>
    </source>
</reference>
<reference key="3">
    <citation type="journal article" date="2017" name="Mol. Plant Pathol.">
        <title>A gapless genome sequence of the fungus Botrytis cinerea.</title>
        <authorList>
            <person name="van Kan J.A.L."/>
            <person name="Stassen J.H.M."/>
            <person name="Mosbach A."/>
            <person name="van der Lee T.A.J."/>
            <person name="Faino L."/>
            <person name="Farmer A.D."/>
            <person name="Papasotiriou D.G."/>
            <person name="Zhou S."/>
            <person name="Seidl M.F."/>
            <person name="Cottam E."/>
            <person name="Edel D."/>
            <person name="Hahn M."/>
            <person name="Schwartz D.C."/>
            <person name="Dietrich R.A."/>
            <person name="Widdison S."/>
            <person name="Scalliet G."/>
        </authorList>
    </citation>
    <scope>NUCLEOTIDE SEQUENCE [LARGE SCALE GENOMIC DNA]</scope>
    <source>
        <strain>B05.10</strain>
    </source>
</reference>
<reference key="4">
    <citation type="journal article" date="2022" name="Microbiol. Spectr.">
        <title>The Linker Region Promotes Activity and Binding Efficiency of Modular LPMO towards Polymeric Substrate.</title>
        <authorList>
            <person name="Srivastava A."/>
            <person name="Nagar P."/>
            <person name="Rathore S."/>
            <person name="Adlakha N."/>
        </authorList>
    </citation>
    <scope>IDENTIFICATION</scope>
    <scope>INDUCTION</scope>
    <scope>FUNCTION</scope>
</reference>